<name>EFG_EHRRW</name>
<feature type="chain" id="PRO_0000225213" description="Elongation factor G">
    <location>
        <begin position="1"/>
        <end position="689"/>
    </location>
</feature>
<feature type="domain" description="tr-type G">
    <location>
        <begin position="8"/>
        <end position="283"/>
    </location>
</feature>
<feature type="binding site" evidence="1">
    <location>
        <begin position="17"/>
        <end position="24"/>
    </location>
    <ligand>
        <name>GTP</name>
        <dbReference type="ChEBI" id="CHEBI:37565"/>
    </ligand>
</feature>
<feature type="binding site" evidence="1">
    <location>
        <begin position="81"/>
        <end position="85"/>
    </location>
    <ligand>
        <name>GTP</name>
        <dbReference type="ChEBI" id="CHEBI:37565"/>
    </ligand>
</feature>
<feature type="binding site" evidence="1">
    <location>
        <begin position="135"/>
        <end position="138"/>
    </location>
    <ligand>
        <name>GTP</name>
        <dbReference type="ChEBI" id="CHEBI:37565"/>
    </ligand>
</feature>
<accession>Q5HC12</accession>
<accession>Q5FCW4</accession>
<proteinExistence type="inferred from homology"/>
<sequence length="689" mass="76042">MSIDNELSKCRNIGIMAHIDAGKTTTTERILFYTGKQNRIGEVHEGAASMDWMEQEKERGITITSAATTCFWNDHRINIIDTPGHVDFTIEVERSLRVLDGAVAVFDGVAGVEPQSETVWRQADKYNVPRICFMNKMDRMGANFYRCVDMVIDRLGATPLVLQLPIGIEKDFVGVVDLLEMRSIIWDEESLGASFHYGEIPGDMIDIAHEYRHKLLESAVELNDDAMNLYFEGKEVPVSLLKNCIRLGVIQSKFVPVLCGSAFKNRGVQPLLDAVVDFLPAPNDVAMIEGIDVKTSNPVSIKSSVNEKFVALAFKVMTDKFVGSLTFIRIYSGKLSSKTTVLNAVKNSTESIGRILLMHANNREDITEAKAGDIVALAGLKKTVTGDTLCALDYPVVLERMEFPDPVMEIAVEPKSTADQEKMGIALSRLVSEDPSLGMCVNPESGQTILKGMGELHLEVIVDRMRREFNVEANIGAPQVAYRETITKSVEIEYIHKKQTGGAGQFAKVNILFEPLPPGSGFQFESKITGGAIPKEYIPGVQNGLEAIRGSGMLAGFPVIDFKATLFDGAFHEVDSSPLAFELAAKGAFRDMVNKAGAILLEPIMKVEIVTPDEYMGDVIGDVNSRRGRVAEMQDRNNTKVILAFIPLAKMFGYVKDLRSMSQGRAQYSMYFSCYEQVPDNILASEIKK</sequence>
<organism>
    <name type="scientific">Ehrlichia ruminantium (strain Welgevonden)</name>
    <dbReference type="NCBI Taxonomy" id="254945"/>
    <lineage>
        <taxon>Bacteria</taxon>
        <taxon>Pseudomonadati</taxon>
        <taxon>Pseudomonadota</taxon>
        <taxon>Alphaproteobacteria</taxon>
        <taxon>Rickettsiales</taxon>
        <taxon>Anaplasmataceae</taxon>
        <taxon>Ehrlichia</taxon>
    </lineage>
</organism>
<comment type="function">
    <text evidence="1">Catalyzes the GTP-dependent ribosomal translocation step during translation elongation. During this step, the ribosome changes from the pre-translocational (PRE) to the post-translocational (POST) state as the newly formed A-site-bound peptidyl-tRNA and P-site-bound deacylated tRNA move to the P and E sites, respectively. Catalyzes the coordinated movement of the two tRNA molecules, the mRNA and conformational changes in the ribosome.</text>
</comment>
<comment type="subcellular location">
    <subcellularLocation>
        <location evidence="1">Cytoplasm</location>
    </subcellularLocation>
</comment>
<comment type="similarity">
    <text evidence="1">Belongs to the TRAFAC class translation factor GTPase superfamily. Classic translation factor GTPase family. EF-G/EF-2 subfamily.</text>
</comment>
<dbReference type="EMBL" id="CR767821">
    <property type="protein sequence ID" value="CAH57881.1"/>
    <property type="molecule type" value="Genomic_DNA"/>
</dbReference>
<dbReference type="EMBL" id="CR925678">
    <property type="protein sequence ID" value="CAI26656.1"/>
    <property type="molecule type" value="Genomic_DNA"/>
</dbReference>
<dbReference type="RefSeq" id="WP_011154849.1">
    <property type="nucleotide sequence ID" value="NC_005295.2"/>
</dbReference>
<dbReference type="SMR" id="Q5HC12"/>
<dbReference type="GeneID" id="33058388"/>
<dbReference type="KEGG" id="eru:Erum1650"/>
<dbReference type="KEGG" id="erw:ERWE_CDS_01620"/>
<dbReference type="eggNOG" id="COG0480">
    <property type="taxonomic scope" value="Bacteria"/>
</dbReference>
<dbReference type="HOGENOM" id="CLU_002794_4_1_5"/>
<dbReference type="Proteomes" id="UP000001021">
    <property type="component" value="Chromosome"/>
</dbReference>
<dbReference type="GO" id="GO:0005737">
    <property type="term" value="C:cytoplasm"/>
    <property type="evidence" value="ECO:0007669"/>
    <property type="project" value="UniProtKB-SubCell"/>
</dbReference>
<dbReference type="GO" id="GO:0005525">
    <property type="term" value="F:GTP binding"/>
    <property type="evidence" value="ECO:0007669"/>
    <property type="project" value="UniProtKB-UniRule"/>
</dbReference>
<dbReference type="GO" id="GO:0003924">
    <property type="term" value="F:GTPase activity"/>
    <property type="evidence" value="ECO:0007669"/>
    <property type="project" value="InterPro"/>
</dbReference>
<dbReference type="GO" id="GO:0003746">
    <property type="term" value="F:translation elongation factor activity"/>
    <property type="evidence" value="ECO:0007669"/>
    <property type="project" value="UniProtKB-UniRule"/>
</dbReference>
<dbReference type="GO" id="GO:0032790">
    <property type="term" value="P:ribosome disassembly"/>
    <property type="evidence" value="ECO:0007669"/>
    <property type="project" value="TreeGrafter"/>
</dbReference>
<dbReference type="CDD" id="cd01886">
    <property type="entry name" value="EF-G"/>
    <property type="match status" value="1"/>
</dbReference>
<dbReference type="CDD" id="cd16262">
    <property type="entry name" value="EFG_III"/>
    <property type="match status" value="1"/>
</dbReference>
<dbReference type="CDD" id="cd01434">
    <property type="entry name" value="EFG_mtEFG1_IV"/>
    <property type="match status" value="1"/>
</dbReference>
<dbReference type="CDD" id="cd03713">
    <property type="entry name" value="EFG_mtEFG_C"/>
    <property type="match status" value="1"/>
</dbReference>
<dbReference type="CDD" id="cd04088">
    <property type="entry name" value="EFG_mtEFG_II"/>
    <property type="match status" value="1"/>
</dbReference>
<dbReference type="FunFam" id="2.40.30.10:FF:000006">
    <property type="entry name" value="Elongation factor G"/>
    <property type="match status" value="1"/>
</dbReference>
<dbReference type="FunFam" id="3.30.230.10:FF:000003">
    <property type="entry name" value="Elongation factor G"/>
    <property type="match status" value="1"/>
</dbReference>
<dbReference type="FunFam" id="3.30.70.240:FF:000001">
    <property type="entry name" value="Elongation factor G"/>
    <property type="match status" value="1"/>
</dbReference>
<dbReference type="FunFam" id="3.30.70.870:FF:000001">
    <property type="entry name" value="Elongation factor G"/>
    <property type="match status" value="1"/>
</dbReference>
<dbReference type="FunFam" id="3.40.50.300:FF:000029">
    <property type="entry name" value="Elongation factor G"/>
    <property type="match status" value="1"/>
</dbReference>
<dbReference type="Gene3D" id="3.30.230.10">
    <property type="match status" value="1"/>
</dbReference>
<dbReference type="Gene3D" id="3.30.70.240">
    <property type="match status" value="1"/>
</dbReference>
<dbReference type="Gene3D" id="3.30.70.870">
    <property type="entry name" value="Elongation Factor G (Translational Gtpase), domain 3"/>
    <property type="match status" value="1"/>
</dbReference>
<dbReference type="Gene3D" id="3.40.50.300">
    <property type="entry name" value="P-loop containing nucleotide triphosphate hydrolases"/>
    <property type="match status" value="1"/>
</dbReference>
<dbReference type="Gene3D" id="2.40.30.10">
    <property type="entry name" value="Translation factors"/>
    <property type="match status" value="1"/>
</dbReference>
<dbReference type="HAMAP" id="MF_00054_B">
    <property type="entry name" value="EF_G_EF_2_B"/>
    <property type="match status" value="1"/>
</dbReference>
<dbReference type="InterPro" id="IPR053905">
    <property type="entry name" value="EF-G-like_DII"/>
</dbReference>
<dbReference type="InterPro" id="IPR041095">
    <property type="entry name" value="EFG_II"/>
</dbReference>
<dbReference type="InterPro" id="IPR009022">
    <property type="entry name" value="EFG_III"/>
</dbReference>
<dbReference type="InterPro" id="IPR035647">
    <property type="entry name" value="EFG_III/V"/>
</dbReference>
<dbReference type="InterPro" id="IPR047872">
    <property type="entry name" value="EFG_IV"/>
</dbReference>
<dbReference type="InterPro" id="IPR035649">
    <property type="entry name" value="EFG_V"/>
</dbReference>
<dbReference type="InterPro" id="IPR000640">
    <property type="entry name" value="EFG_V-like"/>
</dbReference>
<dbReference type="InterPro" id="IPR031157">
    <property type="entry name" value="G_TR_CS"/>
</dbReference>
<dbReference type="InterPro" id="IPR027417">
    <property type="entry name" value="P-loop_NTPase"/>
</dbReference>
<dbReference type="InterPro" id="IPR020568">
    <property type="entry name" value="Ribosomal_Su5_D2-typ_SF"/>
</dbReference>
<dbReference type="InterPro" id="IPR014721">
    <property type="entry name" value="Ribsml_uS5_D2-typ_fold_subgr"/>
</dbReference>
<dbReference type="InterPro" id="IPR005225">
    <property type="entry name" value="Small_GTP-bd"/>
</dbReference>
<dbReference type="InterPro" id="IPR000795">
    <property type="entry name" value="T_Tr_GTP-bd_dom"/>
</dbReference>
<dbReference type="InterPro" id="IPR009000">
    <property type="entry name" value="Transl_B-barrel_sf"/>
</dbReference>
<dbReference type="InterPro" id="IPR004540">
    <property type="entry name" value="Transl_elong_EFG/EF2"/>
</dbReference>
<dbReference type="InterPro" id="IPR005517">
    <property type="entry name" value="Transl_elong_EFG/EF2_IV"/>
</dbReference>
<dbReference type="NCBIfam" id="TIGR00484">
    <property type="entry name" value="EF-G"/>
    <property type="match status" value="1"/>
</dbReference>
<dbReference type="NCBIfam" id="NF009381">
    <property type="entry name" value="PRK12740.1-5"/>
    <property type="match status" value="1"/>
</dbReference>
<dbReference type="NCBIfam" id="TIGR00231">
    <property type="entry name" value="small_GTP"/>
    <property type="match status" value="1"/>
</dbReference>
<dbReference type="PANTHER" id="PTHR43261:SF1">
    <property type="entry name" value="RIBOSOME-RELEASING FACTOR 2, MITOCHONDRIAL"/>
    <property type="match status" value="1"/>
</dbReference>
<dbReference type="PANTHER" id="PTHR43261">
    <property type="entry name" value="TRANSLATION ELONGATION FACTOR G-RELATED"/>
    <property type="match status" value="1"/>
</dbReference>
<dbReference type="Pfam" id="PF22042">
    <property type="entry name" value="EF-G_D2"/>
    <property type="match status" value="1"/>
</dbReference>
<dbReference type="Pfam" id="PF00679">
    <property type="entry name" value="EFG_C"/>
    <property type="match status" value="1"/>
</dbReference>
<dbReference type="Pfam" id="PF14492">
    <property type="entry name" value="EFG_III"/>
    <property type="match status" value="1"/>
</dbReference>
<dbReference type="Pfam" id="PF03764">
    <property type="entry name" value="EFG_IV"/>
    <property type="match status" value="1"/>
</dbReference>
<dbReference type="Pfam" id="PF00009">
    <property type="entry name" value="GTP_EFTU"/>
    <property type="match status" value="1"/>
</dbReference>
<dbReference type="PRINTS" id="PR00315">
    <property type="entry name" value="ELONGATNFCT"/>
</dbReference>
<dbReference type="SMART" id="SM00838">
    <property type="entry name" value="EFG_C"/>
    <property type="match status" value="1"/>
</dbReference>
<dbReference type="SMART" id="SM00889">
    <property type="entry name" value="EFG_IV"/>
    <property type="match status" value="1"/>
</dbReference>
<dbReference type="SUPFAM" id="SSF54980">
    <property type="entry name" value="EF-G C-terminal domain-like"/>
    <property type="match status" value="2"/>
</dbReference>
<dbReference type="SUPFAM" id="SSF52540">
    <property type="entry name" value="P-loop containing nucleoside triphosphate hydrolases"/>
    <property type="match status" value="1"/>
</dbReference>
<dbReference type="SUPFAM" id="SSF54211">
    <property type="entry name" value="Ribosomal protein S5 domain 2-like"/>
    <property type="match status" value="1"/>
</dbReference>
<dbReference type="SUPFAM" id="SSF50447">
    <property type="entry name" value="Translation proteins"/>
    <property type="match status" value="1"/>
</dbReference>
<dbReference type="PROSITE" id="PS00301">
    <property type="entry name" value="G_TR_1"/>
    <property type="match status" value="1"/>
</dbReference>
<dbReference type="PROSITE" id="PS51722">
    <property type="entry name" value="G_TR_2"/>
    <property type="match status" value="1"/>
</dbReference>
<keyword id="KW-0963">Cytoplasm</keyword>
<keyword id="KW-0251">Elongation factor</keyword>
<keyword id="KW-0342">GTP-binding</keyword>
<keyword id="KW-0547">Nucleotide-binding</keyword>
<keyword id="KW-0648">Protein biosynthesis</keyword>
<protein>
    <recommendedName>
        <fullName evidence="1">Elongation factor G</fullName>
        <shortName evidence="1">EF-G</shortName>
    </recommendedName>
</protein>
<gene>
    <name evidence="1" type="primary">fusA</name>
    <name type="ordered locus">Erum1650</name>
    <name type="ordered locus">ERWE_CDS_01620</name>
</gene>
<reference key="1">
    <citation type="journal article" date="2005" name="Proc. Natl. Acad. Sci. U.S.A.">
        <title>The genome of the heartwater agent Ehrlichia ruminantium contains multiple tandem repeats of actively variable copy number.</title>
        <authorList>
            <person name="Collins N.E."/>
            <person name="Liebenberg J."/>
            <person name="de Villiers E.P."/>
            <person name="Brayton K.A."/>
            <person name="Louw E."/>
            <person name="Pretorius A."/>
            <person name="Faber F.E."/>
            <person name="van Heerden H."/>
            <person name="Josemans A."/>
            <person name="van Kleef M."/>
            <person name="Steyn H.C."/>
            <person name="van Strijp M.F."/>
            <person name="Zweygarth E."/>
            <person name="Jongejan F."/>
            <person name="Maillard J.C."/>
            <person name="Berthier D."/>
            <person name="Botha M."/>
            <person name="Joubert F."/>
            <person name="Corton C.H."/>
            <person name="Thomson N.R."/>
            <person name="Allsopp M.T."/>
            <person name="Allsopp B.A."/>
        </authorList>
    </citation>
    <scope>NUCLEOTIDE SEQUENCE [LARGE SCALE GENOMIC DNA]</scope>
    <source>
        <strain>Welgevonden</strain>
    </source>
</reference>
<reference key="2">
    <citation type="journal article" date="2006" name="J. Bacteriol.">
        <title>Comparative genomic analysis of three strains of Ehrlichia ruminantium reveals an active process of genome size plasticity.</title>
        <authorList>
            <person name="Frutos R."/>
            <person name="Viari A."/>
            <person name="Ferraz C."/>
            <person name="Morgat A."/>
            <person name="Eychenie S."/>
            <person name="Kandassamy Y."/>
            <person name="Chantal I."/>
            <person name="Bensaid A."/>
            <person name="Coissac E."/>
            <person name="Vachiery N."/>
            <person name="Demaille J."/>
            <person name="Martinez D."/>
        </authorList>
    </citation>
    <scope>NUCLEOTIDE SEQUENCE [LARGE SCALE GENOMIC DNA]</scope>
    <source>
        <strain>Welgevonden</strain>
    </source>
</reference>
<evidence type="ECO:0000255" key="1">
    <source>
        <dbReference type="HAMAP-Rule" id="MF_00054"/>
    </source>
</evidence>